<comment type="function">
    <text evidence="1">Channel that opens in response to stretch forces in the membrane lipid bilayer. May participate in the regulation of osmotic pressure changes within the cell.</text>
</comment>
<comment type="subunit">
    <text evidence="1">Homopentamer.</text>
</comment>
<comment type="subcellular location">
    <subcellularLocation>
        <location evidence="1">Cell inner membrane</location>
        <topology evidence="1">Multi-pass membrane protein</topology>
    </subcellularLocation>
</comment>
<comment type="similarity">
    <text evidence="1">Belongs to the MscL family.</text>
</comment>
<proteinExistence type="inferred from homology"/>
<keyword id="KW-0997">Cell inner membrane</keyword>
<keyword id="KW-1003">Cell membrane</keyword>
<keyword id="KW-0407">Ion channel</keyword>
<keyword id="KW-0406">Ion transport</keyword>
<keyword id="KW-0472">Membrane</keyword>
<keyword id="KW-0812">Transmembrane</keyword>
<keyword id="KW-1133">Transmembrane helix</keyword>
<keyword id="KW-0813">Transport</keyword>
<sequence length="144" mass="15748">MSMMSEFKTFAMRGNVIDLAVGVIIGAAFGKIVDSVVNDLIMPVIGRIVGKLDFSNMFVTLAEPPPGTPMTLDALKKAGVPVFAYGNFLTIVVNFVILAFIIFLMVRAFNKMRAEEPAPAEPPPPPEDIVLLREIRDSLKTRQP</sequence>
<dbReference type="EMBL" id="CP000090">
    <property type="protein sequence ID" value="AAZ62454.1"/>
    <property type="molecule type" value="Genomic_DNA"/>
</dbReference>
<dbReference type="SMR" id="Q46WM9"/>
<dbReference type="STRING" id="264198.Reut_A3094"/>
<dbReference type="KEGG" id="reu:Reut_A3094"/>
<dbReference type="eggNOG" id="COG1970">
    <property type="taxonomic scope" value="Bacteria"/>
</dbReference>
<dbReference type="HOGENOM" id="CLU_095787_0_1_4"/>
<dbReference type="OrthoDB" id="9810350at2"/>
<dbReference type="GO" id="GO:0005886">
    <property type="term" value="C:plasma membrane"/>
    <property type="evidence" value="ECO:0007669"/>
    <property type="project" value="UniProtKB-SubCell"/>
</dbReference>
<dbReference type="GO" id="GO:0008381">
    <property type="term" value="F:mechanosensitive monoatomic ion channel activity"/>
    <property type="evidence" value="ECO:0007669"/>
    <property type="project" value="UniProtKB-UniRule"/>
</dbReference>
<dbReference type="Gene3D" id="1.10.1200.120">
    <property type="entry name" value="Large-conductance mechanosensitive channel, MscL, domain 1"/>
    <property type="match status" value="1"/>
</dbReference>
<dbReference type="HAMAP" id="MF_00115">
    <property type="entry name" value="MscL"/>
    <property type="match status" value="1"/>
</dbReference>
<dbReference type="InterPro" id="IPR019823">
    <property type="entry name" value="Mechanosensitive_channel_CS"/>
</dbReference>
<dbReference type="InterPro" id="IPR001185">
    <property type="entry name" value="MS_channel"/>
</dbReference>
<dbReference type="InterPro" id="IPR037673">
    <property type="entry name" value="MSC/AndL"/>
</dbReference>
<dbReference type="InterPro" id="IPR036019">
    <property type="entry name" value="MscL_channel"/>
</dbReference>
<dbReference type="NCBIfam" id="TIGR00220">
    <property type="entry name" value="mscL"/>
    <property type="match status" value="1"/>
</dbReference>
<dbReference type="NCBIfam" id="NF001843">
    <property type="entry name" value="PRK00567.1-4"/>
    <property type="match status" value="1"/>
</dbReference>
<dbReference type="NCBIfam" id="NF010557">
    <property type="entry name" value="PRK13952.1"/>
    <property type="match status" value="1"/>
</dbReference>
<dbReference type="PANTHER" id="PTHR30266:SF2">
    <property type="entry name" value="LARGE-CONDUCTANCE MECHANOSENSITIVE CHANNEL"/>
    <property type="match status" value="1"/>
</dbReference>
<dbReference type="PANTHER" id="PTHR30266">
    <property type="entry name" value="MECHANOSENSITIVE CHANNEL MSCL"/>
    <property type="match status" value="1"/>
</dbReference>
<dbReference type="Pfam" id="PF01741">
    <property type="entry name" value="MscL"/>
    <property type="match status" value="1"/>
</dbReference>
<dbReference type="PRINTS" id="PR01264">
    <property type="entry name" value="MECHCHANNEL"/>
</dbReference>
<dbReference type="SUPFAM" id="SSF81330">
    <property type="entry name" value="Gated mechanosensitive channel"/>
    <property type="match status" value="1"/>
</dbReference>
<dbReference type="PROSITE" id="PS01327">
    <property type="entry name" value="MSCL"/>
    <property type="match status" value="1"/>
</dbReference>
<name>MSCL_CUPPJ</name>
<organism>
    <name type="scientific">Cupriavidus pinatubonensis (strain JMP 134 / LMG 1197)</name>
    <name type="common">Cupriavidus necator (strain JMP 134)</name>
    <dbReference type="NCBI Taxonomy" id="264198"/>
    <lineage>
        <taxon>Bacteria</taxon>
        <taxon>Pseudomonadati</taxon>
        <taxon>Pseudomonadota</taxon>
        <taxon>Betaproteobacteria</taxon>
        <taxon>Burkholderiales</taxon>
        <taxon>Burkholderiaceae</taxon>
        <taxon>Cupriavidus</taxon>
    </lineage>
</organism>
<gene>
    <name evidence="1" type="primary">mscL</name>
    <name type="ordered locus">Reut_A3094</name>
</gene>
<reference key="1">
    <citation type="journal article" date="2010" name="PLoS ONE">
        <title>The complete multipartite genome sequence of Cupriavidus necator JMP134, a versatile pollutant degrader.</title>
        <authorList>
            <person name="Lykidis A."/>
            <person name="Perez-Pantoja D."/>
            <person name="Ledger T."/>
            <person name="Mavromatis K."/>
            <person name="Anderson I.J."/>
            <person name="Ivanova N.N."/>
            <person name="Hooper S.D."/>
            <person name="Lapidus A."/>
            <person name="Lucas S."/>
            <person name="Gonzalez B."/>
            <person name="Kyrpides N.C."/>
        </authorList>
    </citation>
    <scope>NUCLEOTIDE SEQUENCE [LARGE SCALE GENOMIC DNA]</scope>
    <source>
        <strain>JMP134 / LMG 1197</strain>
    </source>
</reference>
<feature type="chain" id="PRO_0000238023" description="Large-conductance mechanosensitive channel">
    <location>
        <begin position="1"/>
        <end position="144"/>
    </location>
</feature>
<feature type="transmembrane region" description="Helical" evidence="1">
    <location>
        <begin position="16"/>
        <end position="36"/>
    </location>
</feature>
<feature type="transmembrane region" description="Helical" evidence="1">
    <location>
        <begin position="86"/>
        <end position="106"/>
    </location>
</feature>
<evidence type="ECO:0000255" key="1">
    <source>
        <dbReference type="HAMAP-Rule" id="MF_00115"/>
    </source>
</evidence>
<accession>Q46WM9</accession>
<protein>
    <recommendedName>
        <fullName evidence="1">Large-conductance mechanosensitive channel</fullName>
    </recommendedName>
</protein>